<organism>
    <name type="scientific">Coxiella burnetii (strain CbuK_Q154)</name>
    <name type="common">Coxiella burnetii (strain Q154)</name>
    <dbReference type="NCBI Taxonomy" id="434924"/>
    <lineage>
        <taxon>Bacteria</taxon>
        <taxon>Pseudomonadati</taxon>
        <taxon>Pseudomonadota</taxon>
        <taxon>Gammaproteobacteria</taxon>
        <taxon>Legionellales</taxon>
        <taxon>Coxiellaceae</taxon>
        <taxon>Coxiella</taxon>
    </lineage>
</organism>
<comment type="function">
    <text evidence="1">NDH-1 shuttles electrons from NADH, via FMN and iron-sulfur (Fe-S) centers, to quinones in the respiratory chain. The immediate electron acceptor for the enzyme in this species is believed to be ubiquinone. Couples the redox reaction to proton translocation (for every two electrons transferred, four hydrogen ions are translocated across the cytoplasmic membrane), and thus conserves the redox energy in a proton gradient. This subunit may bind ubiquinone.</text>
</comment>
<comment type="catalytic activity">
    <reaction evidence="1">
        <text>a quinone + NADH + 5 H(+)(in) = a quinol + NAD(+) + 4 H(+)(out)</text>
        <dbReference type="Rhea" id="RHEA:57888"/>
        <dbReference type="ChEBI" id="CHEBI:15378"/>
        <dbReference type="ChEBI" id="CHEBI:24646"/>
        <dbReference type="ChEBI" id="CHEBI:57540"/>
        <dbReference type="ChEBI" id="CHEBI:57945"/>
        <dbReference type="ChEBI" id="CHEBI:132124"/>
    </reaction>
</comment>
<comment type="subunit">
    <text evidence="1">NDH-1 is composed of 14 different subunits. Subunits NuoA, H, J, K, L, M, N constitute the membrane sector of the complex.</text>
</comment>
<comment type="subcellular location">
    <subcellularLocation>
        <location evidence="1">Cell inner membrane</location>
        <topology evidence="1">Multi-pass membrane protein</topology>
    </subcellularLocation>
</comment>
<comment type="similarity">
    <text evidence="1">Belongs to the complex I subunit 1 family.</text>
</comment>
<accession>B6J6A2</accession>
<feature type="chain" id="PRO_1000143585" description="NADH-quinone oxidoreductase subunit H">
    <location>
        <begin position="1"/>
        <end position="340"/>
    </location>
</feature>
<feature type="transmembrane region" description="Helical" evidence="1">
    <location>
        <begin position="9"/>
        <end position="29"/>
    </location>
</feature>
<feature type="transmembrane region" description="Helical" evidence="1">
    <location>
        <begin position="81"/>
        <end position="101"/>
    </location>
</feature>
<feature type="transmembrane region" description="Helical" evidence="1">
    <location>
        <begin position="113"/>
        <end position="133"/>
    </location>
</feature>
<feature type="transmembrane region" description="Helical" evidence="1">
    <location>
        <begin position="158"/>
        <end position="178"/>
    </location>
</feature>
<feature type="transmembrane region" description="Helical" evidence="1">
    <location>
        <begin position="184"/>
        <end position="204"/>
    </location>
</feature>
<feature type="transmembrane region" description="Helical" evidence="1">
    <location>
        <begin position="221"/>
        <end position="240"/>
    </location>
</feature>
<feature type="transmembrane region" description="Helical" evidence="1">
    <location>
        <begin position="245"/>
        <end position="264"/>
    </location>
</feature>
<feature type="transmembrane region" description="Helical" evidence="1">
    <location>
        <begin position="273"/>
        <end position="293"/>
    </location>
</feature>
<feature type="transmembrane region" description="Helical" evidence="1">
    <location>
        <begin position="316"/>
        <end position="336"/>
    </location>
</feature>
<reference key="1">
    <citation type="journal article" date="2009" name="Infect. Immun.">
        <title>Comparative genomics reveal extensive transposon-mediated genomic plasticity and diversity among potential effector proteins within the genus Coxiella.</title>
        <authorList>
            <person name="Beare P.A."/>
            <person name="Unsworth N."/>
            <person name="Andoh M."/>
            <person name="Voth D.E."/>
            <person name="Omsland A."/>
            <person name="Gilk S.D."/>
            <person name="Williams K.P."/>
            <person name="Sobral B.W."/>
            <person name="Kupko J.J. III"/>
            <person name="Porcella S.F."/>
            <person name="Samuel J.E."/>
            <person name="Heinzen R.A."/>
        </authorList>
    </citation>
    <scope>NUCLEOTIDE SEQUENCE [LARGE SCALE GENOMIC DNA]</scope>
    <source>
        <strain>CbuK_Q154</strain>
    </source>
</reference>
<sequence length="340" mass="37995">MTDQLITLIWIIIKIVLILVPLLVAVAFITLAERKVIGYMQSRVGPNRVGFRGLAQPIADIFKLLLKEVIIPTASSRYLYLIAPILSLVPALAAWAVIPFAQGWVLANVNAGLLFLFAMTSLGVYGILVAGWASNSKYAFFGALRSAAQVVSYEIPMGFALVGVLLAAGTMNLQGIVLRQSGGLWHWFWLPLLPLFVTYWITAVAETNRAPFDVAEGESEIVAGFHVEYAGVTFALFFLAEYANMVLVSAIATVIFLGGWLSPFQGIPGLESLFAWVPGIVWFVLKLSLFIFTYFWMRATFPRYRYDQIMRLCWKVLIPVTLVWIIILALAIEFHWTHWL</sequence>
<name>NUOH_COXB1</name>
<protein>
    <recommendedName>
        <fullName evidence="1">NADH-quinone oxidoreductase subunit H</fullName>
        <ecNumber evidence="1">7.1.1.-</ecNumber>
    </recommendedName>
    <alternativeName>
        <fullName evidence="1">NADH dehydrogenase I subunit H</fullName>
    </alternativeName>
    <alternativeName>
        <fullName evidence="1">NDH-1 subunit H</fullName>
    </alternativeName>
</protein>
<dbReference type="EC" id="7.1.1.-" evidence="1"/>
<dbReference type="EMBL" id="CP001020">
    <property type="protein sequence ID" value="ACJ19862.1"/>
    <property type="molecule type" value="Genomic_DNA"/>
</dbReference>
<dbReference type="RefSeq" id="WP_005769061.1">
    <property type="nucleotide sequence ID" value="NC_011528.1"/>
</dbReference>
<dbReference type="SMR" id="B6J6A2"/>
<dbReference type="KEGG" id="cbc:CbuK_0593"/>
<dbReference type="HOGENOM" id="CLU_015134_0_1_6"/>
<dbReference type="GO" id="GO:0005886">
    <property type="term" value="C:plasma membrane"/>
    <property type="evidence" value="ECO:0007669"/>
    <property type="project" value="UniProtKB-SubCell"/>
</dbReference>
<dbReference type="GO" id="GO:0003954">
    <property type="term" value="F:NADH dehydrogenase activity"/>
    <property type="evidence" value="ECO:0007669"/>
    <property type="project" value="TreeGrafter"/>
</dbReference>
<dbReference type="GO" id="GO:0016655">
    <property type="term" value="F:oxidoreductase activity, acting on NAD(P)H, quinone or similar compound as acceptor"/>
    <property type="evidence" value="ECO:0007669"/>
    <property type="project" value="UniProtKB-UniRule"/>
</dbReference>
<dbReference type="GO" id="GO:0048038">
    <property type="term" value="F:quinone binding"/>
    <property type="evidence" value="ECO:0007669"/>
    <property type="project" value="UniProtKB-KW"/>
</dbReference>
<dbReference type="GO" id="GO:0009060">
    <property type="term" value="P:aerobic respiration"/>
    <property type="evidence" value="ECO:0007669"/>
    <property type="project" value="TreeGrafter"/>
</dbReference>
<dbReference type="HAMAP" id="MF_01350">
    <property type="entry name" value="NDH1_NuoH"/>
    <property type="match status" value="1"/>
</dbReference>
<dbReference type="InterPro" id="IPR001694">
    <property type="entry name" value="NADH_UbQ_OxRdtase_su1/FPO"/>
</dbReference>
<dbReference type="InterPro" id="IPR018086">
    <property type="entry name" value="NADH_UbQ_OxRdtase_su1_CS"/>
</dbReference>
<dbReference type="NCBIfam" id="NF004741">
    <property type="entry name" value="PRK06076.1-2"/>
    <property type="match status" value="1"/>
</dbReference>
<dbReference type="PANTHER" id="PTHR11432">
    <property type="entry name" value="NADH DEHYDROGENASE SUBUNIT 1"/>
    <property type="match status" value="1"/>
</dbReference>
<dbReference type="PANTHER" id="PTHR11432:SF3">
    <property type="entry name" value="NADH-UBIQUINONE OXIDOREDUCTASE CHAIN 1"/>
    <property type="match status" value="1"/>
</dbReference>
<dbReference type="Pfam" id="PF00146">
    <property type="entry name" value="NADHdh"/>
    <property type="match status" value="1"/>
</dbReference>
<dbReference type="PROSITE" id="PS00667">
    <property type="entry name" value="COMPLEX1_ND1_1"/>
    <property type="match status" value="1"/>
</dbReference>
<dbReference type="PROSITE" id="PS00668">
    <property type="entry name" value="COMPLEX1_ND1_2"/>
    <property type="match status" value="1"/>
</dbReference>
<proteinExistence type="inferred from homology"/>
<gene>
    <name evidence="1" type="primary">nuoH</name>
    <name type="ordered locus">CbuK_0593</name>
</gene>
<evidence type="ECO:0000255" key="1">
    <source>
        <dbReference type="HAMAP-Rule" id="MF_01350"/>
    </source>
</evidence>
<keyword id="KW-0997">Cell inner membrane</keyword>
<keyword id="KW-1003">Cell membrane</keyword>
<keyword id="KW-0472">Membrane</keyword>
<keyword id="KW-0520">NAD</keyword>
<keyword id="KW-0874">Quinone</keyword>
<keyword id="KW-1278">Translocase</keyword>
<keyword id="KW-0812">Transmembrane</keyword>
<keyword id="KW-1133">Transmembrane helix</keyword>
<keyword id="KW-0830">Ubiquinone</keyword>